<evidence type="ECO:0000255" key="1">
    <source>
        <dbReference type="HAMAP-Rule" id="MF_00821"/>
    </source>
</evidence>
<comment type="function">
    <text evidence="1">One of the proteins required for the normal export of preproteins out of the cell cytoplasm. It is a molecular chaperone that binds to a subset of precursor proteins, maintaining them in a translocation-competent state. It also specifically binds to its receptor SecA.</text>
</comment>
<comment type="subunit">
    <text evidence="1">Homotetramer, a dimer of dimers. One homotetramer interacts with 1 SecA dimer.</text>
</comment>
<comment type="subcellular location">
    <subcellularLocation>
        <location evidence="1">Cytoplasm</location>
    </subcellularLocation>
</comment>
<comment type="similarity">
    <text evidence="1">Belongs to the SecB family.</text>
</comment>
<sequence length="163" mass="18146">MTEQATNGAADEQQPQFSLQRIYLRDLSFESPKSPEIFRQEWNPSISLDLNTRQKQLDGDFYEVVLTVSVTVKNGEDTTAFIAEVQQAGIFLIKNLDPSSMSHTLGAFCPNILFPYAREALDNLVVRGSFPALMLSPVNFDALYAQEIARMQASGEIPTPSVQ</sequence>
<protein>
    <recommendedName>
        <fullName evidence="1">Protein-export protein SecB</fullName>
    </recommendedName>
</protein>
<dbReference type="EMBL" id="AE004091">
    <property type="protein sequence ID" value="AAG08513.1"/>
    <property type="molecule type" value="Genomic_DNA"/>
</dbReference>
<dbReference type="PIR" id="D83004">
    <property type="entry name" value="D83004"/>
</dbReference>
<dbReference type="RefSeq" id="NP_253815.1">
    <property type="nucleotide sequence ID" value="NC_002516.2"/>
</dbReference>
<dbReference type="RefSeq" id="WP_003096050.1">
    <property type="nucleotide sequence ID" value="NZ_QZGE01000002.1"/>
</dbReference>
<dbReference type="SMR" id="Q9HU56"/>
<dbReference type="FunCoup" id="Q9HU56">
    <property type="interactions" value="330"/>
</dbReference>
<dbReference type="STRING" id="208964.PA5128"/>
<dbReference type="PaxDb" id="208964-PA5128"/>
<dbReference type="DNASU" id="878569"/>
<dbReference type="GeneID" id="77223656"/>
<dbReference type="GeneID" id="878569"/>
<dbReference type="KEGG" id="pae:PA5128"/>
<dbReference type="PATRIC" id="fig|208964.12.peg.5374"/>
<dbReference type="PseudoCAP" id="PA5128"/>
<dbReference type="HOGENOM" id="CLU_111574_1_0_6"/>
<dbReference type="InParanoid" id="Q9HU56"/>
<dbReference type="OrthoDB" id="9795145at2"/>
<dbReference type="PhylomeDB" id="Q9HU56"/>
<dbReference type="BioCyc" id="PAER208964:G1FZ6-5243-MONOMER"/>
<dbReference type="Proteomes" id="UP000002438">
    <property type="component" value="Chromosome"/>
</dbReference>
<dbReference type="GO" id="GO:0005737">
    <property type="term" value="C:cytoplasm"/>
    <property type="evidence" value="ECO:0007669"/>
    <property type="project" value="UniProtKB-SubCell"/>
</dbReference>
<dbReference type="GO" id="GO:0051082">
    <property type="term" value="F:unfolded protein binding"/>
    <property type="evidence" value="ECO:0007669"/>
    <property type="project" value="InterPro"/>
</dbReference>
<dbReference type="GO" id="GO:0006457">
    <property type="term" value="P:protein folding"/>
    <property type="evidence" value="ECO:0007669"/>
    <property type="project" value="UniProtKB-UniRule"/>
</dbReference>
<dbReference type="GO" id="GO:0051262">
    <property type="term" value="P:protein tetramerization"/>
    <property type="evidence" value="ECO:0007669"/>
    <property type="project" value="InterPro"/>
</dbReference>
<dbReference type="GO" id="GO:0015031">
    <property type="term" value="P:protein transport"/>
    <property type="evidence" value="ECO:0007669"/>
    <property type="project" value="UniProtKB-UniRule"/>
</dbReference>
<dbReference type="Gene3D" id="3.10.420.10">
    <property type="entry name" value="SecB-like"/>
    <property type="match status" value="1"/>
</dbReference>
<dbReference type="HAMAP" id="MF_00821">
    <property type="entry name" value="SecB"/>
    <property type="match status" value="1"/>
</dbReference>
<dbReference type="InterPro" id="IPR003708">
    <property type="entry name" value="SecB"/>
</dbReference>
<dbReference type="InterPro" id="IPR035958">
    <property type="entry name" value="SecB-like_sf"/>
</dbReference>
<dbReference type="NCBIfam" id="NF004393">
    <property type="entry name" value="PRK05751.1-4"/>
    <property type="match status" value="1"/>
</dbReference>
<dbReference type="NCBIfam" id="TIGR00809">
    <property type="entry name" value="secB"/>
    <property type="match status" value="1"/>
</dbReference>
<dbReference type="PANTHER" id="PTHR36918">
    <property type="match status" value="1"/>
</dbReference>
<dbReference type="PANTHER" id="PTHR36918:SF1">
    <property type="entry name" value="PROTEIN-EXPORT PROTEIN SECB"/>
    <property type="match status" value="1"/>
</dbReference>
<dbReference type="Pfam" id="PF02556">
    <property type="entry name" value="SecB"/>
    <property type="match status" value="1"/>
</dbReference>
<dbReference type="PRINTS" id="PR01594">
    <property type="entry name" value="SECBCHAPRONE"/>
</dbReference>
<dbReference type="SUPFAM" id="SSF54611">
    <property type="entry name" value="SecB-like"/>
    <property type="match status" value="1"/>
</dbReference>
<organism>
    <name type="scientific">Pseudomonas aeruginosa (strain ATCC 15692 / DSM 22644 / CIP 104116 / JCM 14847 / LMG 12228 / 1C / PRS 101 / PAO1)</name>
    <dbReference type="NCBI Taxonomy" id="208964"/>
    <lineage>
        <taxon>Bacteria</taxon>
        <taxon>Pseudomonadati</taxon>
        <taxon>Pseudomonadota</taxon>
        <taxon>Gammaproteobacteria</taxon>
        <taxon>Pseudomonadales</taxon>
        <taxon>Pseudomonadaceae</taxon>
        <taxon>Pseudomonas</taxon>
    </lineage>
</organism>
<proteinExistence type="inferred from homology"/>
<reference key="1">
    <citation type="journal article" date="2000" name="Nature">
        <title>Complete genome sequence of Pseudomonas aeruginosa PAO1, an opportunistic pathogen.</title>
        <authorList>
            <person name="Stover C.K."/>
            <person name="Pham X.-Q.T."/>
            <person name="Erwin A.L."/>
            <person name="Mizoguchi S.D."/>
            <person name="Warrener P."/>
            <person name="Hickey M.J."/>
            <person name="Brinkman F.S.L."/>
            <person name="Hufnagle W.O."/>
            <person name="Kowalik D.J."/>
            <person name="Lagrou M."/>
            <person name="Garber R.L."/>
            <person name="Goltry L."/>
            <person name="Tolentino E."/>
            <person name="Westbrock-Wadman S."/>
            <person name="Yuan Y."/>
            <person name="Brody L.L."/>
            <person name="Coulter S.N."/>
            <person name="Folger K.R."/>
            <person name="Kas A."/>
            <person name="Larbig K."/>
            <person name="Lim R.M."/>
            <person name="Smith K.A."/>
            <person name="Spencer D.H."/>
            <person name="Wong G.K.-S."/>
            <person name="Wu Z."/>
            <person name="Paulsen I.T."/>
            <person name="Reizer J."/>
            <person name="Saier M.H. Jr."/>
            <person name="Hancock R.E.W."/>
            <person name="Lory S."/>
            <person name="Olson M.V."/>
        </authorList>
    </citation>
    <scope>NUCLEOTIDE SEQUENCE [LARGE SCALE GENOMIC DNA]</scope>
    <source>
        <strain>ATCC 15692 / DSM 22644 / CIP 104116 / JCM 14847 / LMG 12228 / 1C / PRS 101 / PAO1</strain>
    </source>
</reference>
<accession>Q9HU56</accession>
<name>SECB_PSEAE</name>
<feature type="chain" id="PRO_0000055395" description="Protein-export protein SecB">
    <location>
        <begin position="1"/>
        <end position="163"/>
    </location>
</feature>
<gene>
    <name evidence="1" type="primary">secB</name>
    <name type="ordered locus">PA5128</name>
</gene>
<keyword id="KW-0143">Chaperone</keyword>
<keyword id="KW-0963">Cytoplasm</keyword>
<keyword id="KW-0653">Protein transport</keyword>
<keyword id="KW-1185">Reference proteome</keyword>
<keyword id="KW-0811">Translocation</keyword>
<keyword id="KW-0813">Transport</keyword>